<organism>
    <name type="scientific">Acidianus filamentous virus 2 (isolate Italy/Pozzuoli)</name>
    <name type="common">AFV-2</name>
    <dbReference type="NCBI Taxonomy" id="654910"/>
    <lineage>
        <taxon>Viruses</taxon>
        <taxon>Adnaviria</taxon>
        <taxon>Zilligvirae</taxon>
        <taxon>Taleaviricota</taxon>
        <taxon>Tokiviricetes</taxon>
        <taxon>Ligamenvirales</taxon>
        <taxon>Lipothrixviridae</taxon>
        <taxon>Deltalipothrixvirus</taxon>
        <taxon>Acidianus filamentous virus 2</taxon>
    </lineage>
</organism>
<reference key="1">
    <citation type="journal article" date="2005" name="J. Bacteriol.">
        <title>Structure and genome organization of AFV2, a novel archaeal lipothrixvirus with unusual terminal and core structures.</title>
        <authorList>
            <person name="Haring M."/>
            <person name="Vestergaard G."/>
            <person name="Brugger K."/>
            <person name="Rachel R."/>
            <person name="Garrett R.A."/>
            <person name="Prangishvili D."/>
        </authorList>
    </citation>
    <scope>NUCLEOTIDE SEQUENCE [GENOMIC DNA]</scope>
</reference>
<dbReference type="EMBL" id="AJ854042">
    <property type="protein sequence ID" value="CAH69426.1"/>
    <property type="molecule type" value="Genomic_DNA"/>
</dbReference>
<dbReference type="RefSeq" id="YP_001496964.1">
    <property type="nucleotide sequence ID" value="NC_009884.1"/>
</dbReference>
<dbReference type="KEGG" id="vg:5656083"/>
<dbReference type="Proteomes" id="UP000006364">
    <property type="component" value="Genome"/>
</dbReference>
<organismHost>
    <name type="scientific">Acidianus sp. F28</name>
    <dbReference type="NCBI Taxonomy" id="315458"/>
</organismHost>
<name>Y147_AFV2P</name>
<protein>
    <recommendedName>
        <fullName>Uncharacterized protein ORF147</fullName>
    </recommendedName>
</protein>
<feature type="chain" id="PRO_0000384511" description="Uncharacterized protein ORF147">
    <location>
        <begin position="1"/>
        <end position="147"/>
    </location>
</feature>
<proteinExistence type="predicted"/>
<sequence>MSNSIDQNTMRTILLNSVQGGDVDANGNLIAKVSLMKLFQQFGSDITFSRITLDGDTINLYILSTINWQPIDVGNGITLDLRQYAGTTVIKIPIKKKFLDDLTQIANLPIVGVEQVNVNNTTDVVIKINTGKKMTATTSSSPPTIDF</sequence>
<keyword id="KW-1185">Reference proteome</keyword>
<accession>Q573D0</accession>
<gene>
    <name type="ORF">ORF147</name>
</gene>